<sequence>MESYDIIANQPVVIDNGSGVIKAGFAGDQIPKYCFPNYVGRPKHMRVMAGALEGDLFIGPKAEEHRGLLTIRYPMEHGVVRDWNDMERIWQYVYSKDQLQTFSEEHPVLLTEAPLNPSKNREKAAEVFFETFNVPALFISMQAVLSLYATGRTTGVVLDSGDGVTHAVPIYEGFAMPHSIMRVDIAGRDVSRYLRLLLRKEGVDFHTSAEFEVVRTIKERACYLSINPQKDEALETEKVQYTLPDGSTLDVGPARFRAPELLFQPDLVGDESEGLHEVVAFAIHKSDMDLRRTLFANIVLSGGSTLFKGFGDRLLSEVKKLAPKDIKIKISAPQERLYSTWIGGSILASLDTFKKMWVSKKEYEEDGSRAIHRKTF</sequence>
<organism>
    <name type="scientific">Homo sapiens</name>
    <name type="common">Human</name>
    <dbReference type="NCBI Taxonomy" id="9606"/>
    <lineage>
        <taxon>Eukaryota</taxon>
        <taxon>Metazoa</taxon>
        <taxon>Chordata</taxon>
        <taxon>Craniata</taxon>
        <taxon>Vertebrata</taxon>
        <taxon>Euteleostomi</taxon>
        <taxon>Mammalia</taxon>
        <taxon>Eutheria</taxon>
        <taxon>Euarchontoglires</taxon>
        <taxon>Primates</taxon>
        <taxon>Haplorrhini</taxon>
        <taxon>Catarrhini</taxon>
        <taxon>Hominidae</taxon>
        <taxon>Homo</taxon>
    </lineage>
</organism>
<comment type="function">
    <text>Component of a multi-subunit complex involved in microtubule based vesicle motility. It is associated with the centrosome.</text>
</comment>
<comment type="interaction">
    <interactant intactId="EBI-367493">
        <id>P42025</id>
    </interactant>
    <interactant intactId="EBI-724352">
        <id>Q14203</id>
        <label>DCTN1</label>
    </interactant>
    <organismsDiffer>false</organismsDiffer>
    <experiments>6</experiments>
</comment>
<comment type="interaction">
    <interactant intactId="EBI-367493">
        <id>P42025</id>
    </interactant>
    <interactant intactId="EBI-466029">
        <id>P42858</id>
        <label>HTT</label>
    </interactant>
    <organismsDiffer>false</organismsDiffer>
    <experiments>3</experiments>
</comment>
<comment type="interaction">
    <interactant intactId="EBI-367493">
        <id>P42025</id>
    </interactant>
    <interactant intactId="EBI-367600">
        <id>Q9QZB7</id>
        <label>Actr10</label>
    </interactant>
    <organismsDiffer>true</organismsDiffer>
    <experiments>2</experiments>
</comment>
<comment type="subcellular location">
    <subcellularLocation>
        <location>Cytoplasm</location>
        <location>Cytoskeleton</location>
    </subcellularLocation>
    <subcellularLocation>
        <location>Cytoplasm</location>
        <location>Cytoskeleton</location>
        <location>Microtubule organizing center</location>
        <location>Centrosome</location>
    </subcellularLocation>
</comment>
<comment type="similarity">
    <text evidence="3">Belongs to the actin family. ARP1 subfamily.</text>
</comment>
<evidence type="ECO:0000250" key="1">
    <source>
        <dbReference type="UniProtKB" id="Q8R5C5"/>
    </source>
</evidence>
<evidence type="ECO:0000269" key="2">
    <source>
    </source>
</evidence>
<evidence type="ECO:0000305" key="3"/>
<evidence type="ECO:0007744" key="4">
    <source>
    </source>
</evidence>
<evidence type="ECO:0007744" key="5">
    <source>
    </source>
</evidence>
<reference key="1">
    <citation type="journal article" date="1994" name="Mol. Biol. Cell">
        <title>Beta-centractin: characterization and distribution of a new member of the centractin family of actin-related proteins.</title>
        <authorList>
            <person name="Clark S.W."/>
            <person name="Staub O."/>
            <person name="Holzbaur E.L.F."/>
            <person name="Paschal B.M."/>
            <person name="Vallee R.B."/>
            <person name="Meyer D.I."/>
            <person name="Clark I.B."/>
        </authorList>
    </citation>
    <scope>NUCLEOTIDE SEQUENCE [MRNA]</scope>
    <source>
        <tissue>Testis</tissue>
    </source>
</reference>
<reference key="2">
    <citation type="journal article" date="2005" name="Nature">
        <title>Generation and annotation of the DNA sequences of human chromosomes 2 and 4.</title>
        <authorList>
            <person name="Hillier L.W."/>
            <person name="Graves T.A."/>
            <person name="Fulton R.S."/>
            <person name="Fulton L.A."/>
            <person name="Pepin K.H."/>
            <person name="Minx P."/>
            <person name="Wagner-McPherson C."/>
            <person name="Layman D."/>
            <person name="Wylie K."/>
            <person name="Sekhon M."/>
            <person name="Becker M.C."/>
            <person name="Fewell G.A."/>
            <person name="Delehaunty K.D."/>
            <person name="Miner T.L."/>
            <person name="Nash W.E."/>
            <person name="Kremitzki C."/>
            <person name="Oddy L."/>
            <person name="Du H."/>
            <person name="Sun H."/>
            <person name="Bradshaw-Cordum H."/>
            <person name="Ali J."/>
            <person name="Carter J."/>
            <person name="Cordes M."/>
            <person name="Harris A."/>
            <person name="Isak A."/>
            <person name="van Brunt A."/>
            <person name="Nguyen C."/>
            <person name="Du F."/>
            <person name="Courtney L."/>
            <person name="Kalicki J."/>
            <person name="Ozersky P."/>
            <person name="Abbott S."/>
            <person name="Armstrong J."/>
            <person name="Belter E.A."/>
            <person name="Caruso L."/>
            <person name="Cedroni M."/>
            <person name="Cotton M."/>
            <person name="Davidson T."/>
            <person name="Desai A."/>
            <person name="Elliott G."/>
            <person name="Erb T."/>
            <person name="Fronick C."/>
            <person name="Gaige T."/>
            <person name="Haakenson W."/>
            <person name="Haglund K."/>
            <person name="Holmes A."/>
            <person name="Harkins R."/>
            <person name="Kim K."/>
            <person name="Kruchowski S.S."/>
            <person name="Strong C.M."/>
            <person name="Grewal N."/>
            <person name="Goyea E."/>
            <person name="Hou S."/>
            <person name="Levy A."/>
            <person name="Martinka S."/>
            <person name="Mead K."/>
            <person name="McLellan M.D."/>
            <person name="Meyer R."/>
            <person name="Randall-Maher J."/>
            <person name="Tomlinson C."/>
            <person name="Dauphin-Kohlberg S."/>
            <person name="Kozlowicz-Reilly A."/>
            <person name="Shah N."/>
            <person name="Swearengen-Shahid S."/>
            <person name="Snider J."/>
            <person name="Strong J.T."/>
            <person name="Thompson J."/>
            <person name="Yoakum M."/>
            <person name="Leonard S."/>
            <person name="Pearman C."/>
            <person name="Trani L."/>
            <person name="Radionenko M."/>
            <person name="Waligorski J.E."/>
            <person name="Wang C."/>
            <person name="Rock S.M."/>
            <person name="Tin-Wollam A.-M."/>
            <person name="Maupin R."/>
            <person name="Latreille P."/>
            <person name="Wendl M.C."/>
            <person name="Yang S.-P."/>
            <person name="Pohl C."/>
            <person name="Wallis J.W."/>
            <person name="Spieth J."/>
            <person name="Bieri T.A."/>
            <person name="Berkowicz N."/>
            <person name="Nelson J.O."/>
            <person name="Osborne J."/>
            <person name="Ding L."/>
            <person name="Meyer R."/>
            <person name="Sabo A."/>
            <person name="Shotland Y."/>
            <person name="Sinha P."/>
            <person name="Wohldmann P.E."/>
            <person name="Cook L.L."/>
            <person name="Hickenbotham M.T."/>
            <person name="Eldred J."/>
            <person name="Williams D."/>
            <person name="Jones T.A."/>
            <person name="She X."/>
            <person name="Ciccarelli F.D."/>
            <person name="Izaurralde E."/>
            <person name="Taylor J."/>
            <person name="Schmutz J."/>
            <person name="Myers R.M."/>
            <person name="Cox D.R."/>
            <person name="Huang X."/>
            <person name="McPherson J.D."/>
            <person name="Mardis E.R."/>
            <person name="Clifton S.W."/>
            <person name="Warren W.C."/>
            <person name="Chinwalla A.T."/>
            <person name="Eddy S.R."/>
            <person name="Marra M.A."/>
            <person name="Ovcharenko I."/>
            <person name="Furey T.S."/>
            <person name="Miller W."/>
            <person name="Eichler E.E."/>
            <person name="Bork P."/>
            <person name="Suyama M."/>
            <person name="Torrents D."/>
            <person name="Waterston R.H."/>
            <person name="Wilson R.K."/>
        </authorList>
    </citation>
    <scope>NUCLEOTIDE SEQUENCE [LARGE SCALE GENOMIC DNA]</scope>
</reference>
<reference key="3">
    <citation type="submission" date="2005-09" db="EMBL/GenBank/DDBJ databases">
        <authorList>
            <person name="Mural R.J."/>
            <person name="Istrail S."/>
            <person name="Sutton G.G."/>
            <person name="Florea L."/>
            <person name="Halpern A.L."/>
            <person name="Mobarry C.M."/>
            <person name="Lippert R."/>
            <person name="Walenz B."/>
            <person name="Shatkay H."/>
            <person name="Dew I."/>
            <person name="Miller J.R."/>
            <person name="Flanigan M.J."/>
            <person name="Edwards N.J."/>
            <person name="Bolanos R."/>
            <person name="Fasulo D."/>
            <person name="Halldorsson B.V."/>
            <person name="Hannenhalli S."/>
            <person name="Turner R."/>
            <person name="Yooseph S."/>
            <person name="Lu F."/>
            <person name="Nusskern D.R."/>
            <person name="Shue B.C."/>
            <person name="Zheng X.H."/>
            <person name="Zhong F."/>
            <person name="Delcher A.L."/>
            <person name="Huson D.H."/>
            <person name="Kravitz S.A."/>
            <person name="Mouchard L."/>
            <person name="Reinert K."/>
            <person name="Remington K.A."/>
            <person name="Clark A.G."/>
            <person name="Waterman M.S."/>
            <person name="Eichler E.E."/>
            <person name="Adams M.D."/>
            <person name="Hunkapiller M.W."/>
            <person name="Myers E.W."/>
            <person name="Venter J.C."/>
        </authorList>
    </citation>
    <scope>NUCLEOTIDE SEQUENCE [LARGE SCALE GENOMIC DNA]</scope>
</reference>
<reference key="4">
    <citation type="journal article" date="2004" name="Genome Res.">
        <title>The status, quality, and expansion of the NIH full-length cDNA project: the Mammalian Gene Collection (MGC).</title>
        <authorList>
            <consortium name="The MGC Project Team"/>
        </authorList>
    </citation>
    <scope>NUCLEOTIDE SEQUENCE [LARGE SCALE MRNA]</scope>
    <scope>VARIANT ALA-93</scope>
    <source>
        <tissue>Lymph</tissue>
        <tissue>Placenta</tissue>
    </source>
</reference>
<reference key="5">
    <citation type="submission" date="2007-03" db="UniProtKB">
        <authorList>
            <person name="Lubec G."/>
            <person name="Afjehi-Sadat L."/>
        </authorList>
    </citation>
    <scope>PROTEIN SEQUENCE OF 239-255</scope>
    <scope>IDENTIFICATION BY MASS SPECTROMETRY</scope>
    <source>
        <tissue>Brain</tissue>
        <tissue>Cajal-Retzius cell</tissue>
    </source>
</reference>
<reference key="6">
    <citation type="journal article" date="2009" name="Anal. Chem.">
        <title>Lys-N and trypsin cover complementary parts of the phosphoproteome in a refined SCX-based approach.</title>
        <authorList>
            <person name="Gauci S."/>
            <person name="Helbig A.O."/>
            <person name="Slijper M."/>
            <person name="Krijgsveld J."/>
            <person name="Heck A.J."/>
            <person name="Mohammed S."/>
        </authorList>
    </citation>
    <scope>ACETYLATION [LARGE SCALE ANALYSIS] AT MET-1</scope>
    <scope>IDENTIFICATION BY MASS SPECTROMETRY [LARGE SCALE ANALYSIS]</scope>
</reference>
<reference key="7">
    <citation type="journal article" date="2011" name="BMC Syst. Biol.">
        <title>Initial characterization of the human central proteome.</title>
        <authorList>
            <person name="Burkard T.R."/>
            <person name="Planyavsky M."/>
            <person name="Kaupe I."/>
            <person name="Breitwieser F.P."/>
            <person name="Buerckstuemmer T."/>
            <person name="Bennett K.L."/>
            <person name="Superti-Furga G."/>
            <person name="Colinge J."/>
        </authorList>
    </citation>
    <scope>IDENTIFICATION BY MASS SPECTROMETRY [LARGE SCALE ANALYSIS]</scope>
</reference>
<reference key="8">
    <citation type="journal article" date="2012" name="Mol. Cell. Proteomics">
        <title>Comparative large-scale characterisation of plant vs. mammal proteins reveals similar and idiosyncratic N-alpha acetylation features.</title>
        <authorList>
            <person name="Bienvenut W.V."/>
            <person name="Sumpton D."/>
            <person name="Martinez A."/>
            <person name="Lilla S."/>
            <person name="Espagne C."/>
            <person name="Meinnel T."/>
            <person name="Giglione C."/>
        </authorList>
    </citation>
    <scope>ACETYLATION [LARGE SCALE ANALYSIS] AT MET-1</scope>
    <scope>IDENTIFICATION BY MASS SPECTROMETRY [LARGE SCALE ANALYSIS]</scope>
</reference>
<reference key="9">
    <citation type="journal article" date="2014" name="J. Proteomics">
        <title>An enzyme assisted RP-RPLC approach for in-depth analysis of human liver phosphoproteome.</title>
        <authorList>
            <person name="Bian Y."/>
            <person name="Song C."/>
            <person name="Cheng K."/>
            <person name="Dong M."/>
            <person name="Wang F."/>
            <person name="Huang J."/>
            <person name="Sun D."/>
            <person name="Wang L."/>
            <person name="Ye M."/>
            <person name="Zou H."/>
        </authorList>
    </citation>
    <scope>IDENTIFICATION BY MASS SPECTROMETRY [LARGE SCALE ANALYSIS]</scope>
    <source>
        <tissue>Liver</tissue>
    </source>
</reference>
<feature type="chain" id="PRO_0000089060" description="Beta-centractin">
    <location>
        <begin position="1"/>
        <end position="376"/>
    </location>
</feature>
<feature type="modified residue" description="N-acetylmethionine" evidence="4 5">
    <location>
        <position position="1"/>
    </location>
</feature>
<feature type="modified residue" description="3'-nitrotyrosine" evidence="1">
    <location>
        <position position="4"/>
    </location>
</feature>
<feature type="sequence variant" id="VAR_025315" description="In dbSNP:rs11547231." evidence="2">
    <original>V</original>
    <variation>A</variation>
    <location>
        <position position="93"/>
    </location>
</feature>
<feature type="sequence variant" id="VAR_048187" description="In dbSNP:rs11692435.">
    <original>A</original>
    <variation>V</variation>
    <location>
        <position position="143"/>
    </location>
</feature>
<proteinExistence type="evidence at protein level"/>
<dbReference type="EMBL" id="X82207">
    <property type="protein sequence ID" value="CAA57691.1"/>
    <property type="molecule type" value="mRNA"/>
</dbReference>
<dbReference type="EMBL" id="AC017099">
    <property type="protein sequence ID" value="AAY24280.1"/>
    <property type="molecule type" value="Genomic_DNA"/>
</dbReference>
<dbReference type="EMBL" id="CH471127">
    <property type="protein sequence ID" value="EAX01924.1"/>
    <property type="molecule type" value="Genomic_DNA"/>
</dbReference>
<dbReference type="EMBL" id="CH471127">
    <property type="protein sequence ID" value="EAX01927.1"/>
    <property type="molecule type" value="Genomic_DNA"/>
</dbReference>
<dbReference type="EMBL" id="BC004374">
    <property type="protein sequence ID" value="AAH04374.1"/>
    <property type="molecule type" value="mRNA"/>
</dbReference>
<dbReference type="EMBL" id="BC006372">
    <property type="protein sequence ID" value="AAH06372.1"/>
    <property type="molecule type" value="mRNA"/>
</dbReference>
<dbReference type="EMBL" id="BC010090">
    <property type="protein sequence ID" value="AAH10090.1"/>
    <property type="molecule type" value="mRNA"/>
</dbReference>
<dbReference type="CCDS" id="CCDS2033.1"/>
<dbReference type="RefSeq" id="NP_005726.1">
    <property type="nucleotide sequence ID" value="NM_005735.4"/>
</dbReference>
<dbReference type="SMR" id="P42025"/>
<dbReference type="BioGRID" id="115424">
    <property type="interactions" value="126"/>
</dbReference>
<dbReference type="FunCoup" id="P42025">
    <property type="interactions" value="1977"/>
</dbReference>
<dbReference type="IntAct" id="P42025">
    <property type="interactions" value="73"/>
</dbReference>
<dbReference type="MINT" id="P42025"/>
<dbReference type="STRING" id="9606.ENSP00000289228"/>
<dbReference type="GlyGen" id="P42025">
    <property type="glycosylation" value="1 site, 1 O-linked glycan (1 site)"/>
</dbReference>
<dbReference type="iPTMnet" id="P42025"/>
<dbReference type="MetOSite" id="P42025"/>
<dbReference type="PhosphoSitePlus" id="P42025"/>
<dbReference type="SwissPalm" id="P42025"/>
<dbReference type="BioMuta" id="ACTR1B"/>
<dbReference type="DMDM" id="1168333"/>
<dbReference type="OGP" id="P42025"/>
<dbReference type="REPRODUCTION-2DPAGE" id="IPI00029469"/>
<dbReference type="jPOST" id="P42025"/>
<dbReference type="MassIVE" id="P42025"/>
<dbReference type="PaxDb" id="9606-ENSP00000289228"/>
<dbReference type="PeptideAtlas" id="P42025"/>
<dbReference type="ProteomicsDB" id="55480"/>
<dbReference type="Pumba" id="P42025"/>
<dbReference type="Antibodypedia" id="32643">
    <property type="antibodies" value="157 antibodies from 28 providers"/>
</dbReference>
<dbReference type="DNASU" id="10120"/>
<dbReference type="Ensembl" id="ENST00000289228.7">
    <property type="protein sequence ID" value="ENSP00000289228.5"/>
    <property type="gene ID" value="ENSG00000115073.8"/>
</dbReference>
<dbReference type="Ensembl" id="ENST00000708081.1">
    <property type="protein sequence ID" value="ENSP00000517084.1"/>
    <property type="gene ID" value="ENSG00000291597.1"/>
</dbReference>
<dbReference type="GeneID" id="10120"/>
<dbReference type="KEGG" id="hsa:10120"/>
<dbReference type="MANE-Select" id="ENST00000289228.7">
    <property type="protein sequence ID" value="ENSP00000289228.5"/>
    <property type="RefSeq nucleotide sequence ID" value="NM_005735.4"/>
    <property type="RefSeq protein sequence ID" value="NP_005726.1"/>
</dbReference>
<dbReference type="UCSC" id="uc002syb.3">
    <property type="organism name" value="human"/>
</dbReference>
<dbReference type="AGR" id="HGNC:168"/>
<dbReference type="CTD" id="10120"/>
<dbReference type="DisGeNET" id="10120"/>
<dbReference type="GeneCards" id="ACTR1B"/>
<dbReference type="HGNC" id="HGNC:168">
    <property type="gene designation" value="ACTR1B"/>
</dbReference>
<dbReference type="HPA" id="ENSG00000115073">
    <property type="expression patterns" value="Low tissue specificity"/>
</dbReference>
<dbReference type="MIM" id="605144">
    <property type="type" value="gene"/>
</dbReference>
<dbReference type="neXtProt" id="NX_P42025"/>
<dbReference type="OpenTargets" id="ENSG00000115073"/>
<dbReference type="PharmGKB" id="PA24487"/>
<dbReference type="VEuPathDB" id="HostDB:ENSG00000115073"/>
<dbReference type="eggNOG" id="KOG0676">
    <property type="taxonomic scope" value="Eukaryota"/>
</dbReference>
<dbReference type="GeneTree" id="ENSGT00940000161587"/>
<dbReference type="HOGENOM" id="CLU_027965_0_1_1"/>
<dbReference type="InParanoid" id="P42025"/>
<dbReference type="OMA" id="YTTWTGG"/>
<dbReference type="OrthoDB" id="5132116at2759"/>
<dbReference type="PAN-GO" id="P42025">
    <property type="GO annotations" value="0 GO annotations based on evolutionary models"/>
</dbReference>
<dbReference type="PhylomeDB" id="P42025"/>
<dbReference type="TreeFam" id="TF300420"/>
<dbReference type="PathwayCommons" id="P42025"/>
<dbReference type="Reactome" id="R-HSA-2132295">
    <property type="pathway name" value="MHC class II antigen presentation"/>
</dbReference>
<dbReference type="Reactome" id="R-HSA-6798695">
    <property type="pathway name" value="Neutrophil degranulation"/>
</dbReference>
<dbReference type="SignaLink" id="P42025"/>
<dbReference type="BioGRID-ORCS" id="10120">
    <property type="hits" value="197 hits in 1155 CRISPR screens"/>
</dbReference>
<dbReference type="CD-CODE" id="8C2F96ED">
    <property type="entry name" value="Centrosome"/>
</dbReference>
<dbReference type="CD-CODE" id="DEE660B4">
    <property type="entry name" value="Stress granule"/>
</dbReference>
<dbReference type="CD-CODE" id="FB4E32DD">
    <property type="entry name" value="Presynaptic clusters and postsynaptic densities"/>
</dbReference>
<dbReference type="ChiTaRS" id="ACTR1B">
    <property type="organism name" value="human"/>
</dbReference>
<dbReference type="GeneWiki" id="ACTR1B"/>
<dbReference type="GenomeRNAi" id="10120"/>
<dbReference type="Pharos" id="P42025">
    <property type="development level" value="Tbio"/>
</dbReference>
<dbReference type="PRO" id="PR:P42025"/>
<dbReference type="Proteomes" id="UP000005640">
    <property type="component" value="Chromosome 2"/>
</dbReference>
<dbReference type="RNAct" id="P42025">
    <property type="molecule type" value="protein"/>
</dbReference>
<dbReference type="Bgee" id="ENSG00000115073">
    <property type="expression patterns" value="Expressed in right frontal lobe and 210 other cell types or tissues"/>
</dbReference>
<dbReference type="GO" id="GO:0005813">
    <property type="term" value="C:centrosome"/>
    <property type="evidence" value="ECO:0000314"/>
    <property type="project" value="UniProtKB"/>
</dbReference>
<dbReference type="GO" id="GO:0005737">
    <property type="term" value="C:cytoplasm"/>
    <property type="evidence" value="ECO:0000314"/>
    <property type="project" value="LIFEdb"/>
</dbReference>
<dbReference type="GO" id="GO:0005829">
    <property type="term" value="C:cytosol"/>
    <property type="evidence" value="ECO:0000304"/>
    <property type="project" value="Reactome"/>
</dbReference>
<dbReference type="GO" id="GO:0005869">
    <property type="term" value="C:dynactin complex"/>
    <property type="evidence" value="ECO:0000318"/>
    <property type="project" value="GO_Central"/>
</dbReference>
<dbReference type="GO" id="GO:0070062">
    <property type="term" value="C:extracellular exosome"/>
    <property type="evidence" value="ECO:0007005"/>
    <property type="project" value="UniProtKB"/>
</dbReference>
<dbReference type="GO" id="GO:0005576">
    <property type="term" value="C:extracellular region"/>
    <property type="evidence" value="ECO:0000304"/>
    <property type="project" value="Reactome"/>
</dbReference>
<dbReference type="GO" id="GO:1904813">
    <property type="term" value="C:ficolin-1-rich granule lumen"/>
    <property type="evidence" value="ECO:0000304"/>
    <property type="project" value="Reactome"/>
</dbReference>
<dbReference type="GO" id="GO:0016020">
    <property type="term" value="C:membrane"/>
    <property type="evidence" value="ECO:0007005"/>
    <property type="project" value="UniProtKB"/>
</dbReference>
<dbReference type="GO" id="GO:0034774">
    <property type="term" value="C:secretory granule lumen"/>
    <property type="evidence" value="ECO:0000304"/>
    <property type="project" value="Reactome"/>
</dbReference>
<dbReference type="GO" id="GO:0005524">
    <property type="term" value="F:ATP binding"/>
    <property type="evidence" value="ECO:0007669"/>
    <property type="project" value="UniProtKB-KW"/>
</dbReference>
<dbReference type="CDD" id="cd10216">
    <property type="entry name" value="ASKHA_NBD_Arp1"/>
    <property type="match status" value="1"/>
</dbReference>
<dbReference type="FunFam" id="3.30.420.40:FF:000188">
    <property type="entry name" value="Actin like 6B"/>
    <property type="match status" value="1"/>
</dbReference>
<dbReference type="FunFam" id="3.30.420.40:FF:000205">
    <property type="entry name" value="Actin, alpha skeletal muscle"/>
    <property type="match status" value="1"/>
</dbReference>
<dbReference type="FunFam" id="3.30.420.40:FF:000018">
    <property type="entry name" value="Actin-like protein (Centractin)"/>
    <property type="match status" value="1"/>
</dbReference>
<dbReference type="FunFam" id="3.90.640.10:FF:000008">
    <property type="entry name" value="alpha-centractin isoform X1"/>
    <property type="match status" value="1"/>
</dbReference>
<dbReference type="Gene3D" id="3.30.420.40">
    <property type="match status" value="2"/>
</dbReference>
<dbReference type="Gene3D" id="3.90.640.10">
    <property type="entry name" value="Actin, Chain A, domain 4"/>
    <property type="match status" value="1"/>
</dbReference>
<dbReference type="InterPro" id="IPR004000">
    <property type="entry name" value="Actin"/>
</dbReference>
<dbReference type="InterPro" id="IPR020902">
    <property type="entry name" value="Actin/actin-like_CS"/>
</dbReference>
<dbReference type="InterPro" id="IPR004001">
    <property type="entry name" value="Actin_CS"/>
</dbReference>
<dbReference type="InterPro" id="IPR043129">
    <property type="entry name" value="ATPase_NBD"/>
</dbReference>
<dbReference type="PANTHER" id="PTHR11937">
    <property type="entry name" value="ACTIN"/>
    <property type="match status" value="1"/>
</dbReference>
<dbReference type="Pfam" id="PF00022">
    <property type="entry name" value="Actin"/>
    <property type="match status" value="1"/>
</dbReference>
<dbReference type="PRINTS" id="PR00190">
    <property type="entry name" value="ACTIN"/>
</dbReference>
<dbReference type="SMART" id="SM00268">
    <property type="entry name" value="ACTIN"/>
    <property type="match status" value="1"/>
</dbReference>
<dbReference type="SUPFAM" id="SSF53067">
    <property type="entry name" value="Actin-like ATPase domain"/>
    <property type="match status" value="2"/>
</dbReference>
<dbReference type="PROSITE" id="PS00432">
    <property type="entry name" value="ACTINS_2"/>
    <property type="match status" value="1"/>
</dbReference>
<dbReference type="PROSITE" id="PS01132">
    <property type="entry name" value="ACTINS_ACT_LIKE"/>
    <property type="match status" value="1"/>
</dbReference>
<name>ACTY_HUMAN</name>
<gene>
    <name type="primary">ACTR1B</name>
    <name type="synonym">CTRN2</name>
</gene>
<accession>P42025</accession>
<accession>D3DVH2</accession>
<accession>Q53SK5</accession>
<accession>Q9BRB7</accession>
<keyword id="KW-0007">Acetylation</keyword>
<keyword id="KW-0067">ATP-binding</keyword>
<keyword id="KW-0963">Cytoplasm</keyword>
<keyword id="KW-0206">Cytoskeleton</keyword>
<keyword id="KW-0903">Direct protein sequencing</keyword>
<keyword id="KW-0944">Nitration</keyword>
<keyword id="KW-0547">Nucleotide-binding</keyword>
<keyword id="KW-1267">Proteomics identification</keyword>
<keyword id="KW-1185">Reference proteome</keyword>
<protein>
    <recommendedName>
        <fullName>Beta-centractin</fullName>
    </recommendedName>
    <alternativeName>
        <fullName>Actin-related protein 1B</fullName>
        <shortName>ARP1B</shortName>
    </alternativeName>
</protein>